<keyword id="KW-0249">Electron transport</keyword>
<keyword id="KW-0349">Heme</keyword>
<keyword id="KW-0408">Iron</keyword>
<keyword id="KW-0472">Membrane</keyword>
<keyword id="KW-0479">Metal-binding</keyword>
<keyword id="KW-0496">Mitochondrion</keyword>
<keyword id="KW-0999">Mitochondrion inner membrane</keyword>
<keyword id="KW-1185">Reference proteome</keyword>
<keyword id="KW-0679">Respiratory chain</keyword>
<keyword id="KW-0812">Transmembrane</keyword>
<keyword id="KW-1133">Transmembrane helix</keyword>
<keyword id="KW-0813">Transport</keyword>
<keyword id="KW-0830">Ubiquinone</keyword>
<evidence type="ECO:0000250" key="1"/>
<evidence type="ECO:0000250" key="2">
    <source>
        <dbReference type="UniProtKB" id="P00157"/>
    </source>
</evidence>
<evidence type="ECO:0000255" key="3">
    <source>
        <dbReference type="PROSITE-ProRule" id="PRU00967"/>
    </source>
</evidence>
<evidence type="ECO:0000255" key="4">
    <source>
        <dbReference type="PROSITE-ProRule" id="PRU00968"/>
    </source>
</evidence>
<evidence type="ECO:0000312" key="5">
    <source>
        <dbReference type="Proteomes" id="UP000001554"/>
    </source>
</evidence>
<proteinExistence type="inferred from homology"/>
<feature type="chain" id="PRO_0000060689" description="Cytochrome b">
    <location>
        <begin position="1"/>
        <end position="380"/>
    </location>
</feature>
<feature type="transmembrane region" description="Helical" evidence="2">
    <location>
        <begin position="34"/>
        <end position="54"/>
    </location>
</feature>
<feature type="transmembrane region" description="Helical" evidence="2">
    <location>
        <begin position="78"/>
        <end position="99"/>
    </location>
</feature>
<feature type="transmembrane region" description="Helical" evidence="2">
    <location>
        <begin position="114"/>
        <end position="134"/>
    </location>
</feature>
<feature type="transmembrane region" description="Helical" evidence="2">
    <location>
        <begin position="179"/>
        <end position="199"/>
    </location>
</feature>
<feature type="transmembrane region" description="Helical" evidence="2">
    <location>
        <begin position="227"/>
        <end position="247"/>
    </location>
</feature>
<feature type="transmembrane region" description="Helical" evidence="2">
    <location>
        <begin position="289"/>
        <end position="309"/>
    </location>
</feature>
<feature type="transmembrane region" description="Helical" evidence="2">
    <location>
        <begin position="321"/>
        <end position="341"/>
    </location>
</feature>
<feature type="transmembrane region" description="Helical" evidence="2">
    <location>
        <begin position="348"/>
        <end position="368"/>
    </location>
</feature>
<feature type="binding site" description="axial binding residue" evidence="2">
    <location>
        <position position="84"/>
    </location>
    <ligand>
        <name>heme b</name>
        <dbReference type="ChEBI" id="CHEBI:60344"/>
        <label>b562</label>
    </ligand>
    <ligandPart>
        <name>Fe</name>
        <dbReference type="ChEBI" id="CHEBI:18248"/>
    </ligandPart>
</feature>
<feature type="binding site" description="axial binding residue" evidence="2">
    <location>
        <position position="98"/>
    </location>
    <ligand>
        <name>heme b</name>
        <dbReference type="ChEBI" id="CHEBI:60344"/>
        <label>b566</label>
    </ligand>
    <ligandPart>
        <name>Fe</name>
        <dbReference type="ChEBI" id="CHEBI:18248"/>
    </ligandPart>
</feature>
<feature type="binding site" description="axial binding residue" evidence="2">
    <location>
        <position position="183"/>
    </location>
    <ligand>
        <name>heme b</name>
        <dbReference type="ChEBI" id="CHEBI:60344"/>
        <label>b562</label>
    </ligand>
    <ligandPart>
        <name>Fe</name>
        <dbReference type="ChEBI" id="CHEBI:18248"/>
    </ligandPart>
</feature>
<feature type="binding site" description="axial binding residue" evidence="2">
    <location>
        <position position="197"/>
    </location>
    <ligand>
        <name>heme b</name>
        <dbReference type="ChEBI" id="CHEBI:60344"/>
        <label>b566</label>
    </ligand>
    <ligandPart>
        <name>Fe</name>
        <dbReference type="ChEBI" id="CHEBI:18248"/>
    </ligandPart>
</feature>
<feature type="binding site" evidence="2">
    <location>
        <position position="202"/>
    </location>
    <ligand>
        <name>a ubiquinone</name>
        <dbReference type="ChEBI" id="CHEBI:16389"/>
    </ligand>
</feature>
<protein>
    <recommendedName>
        <fullName>Cytochrome b</fullName>
    </recommendedName>
    <alternativeName>
        <fullName>Complex III subunit 3</fullName>
    </alternativeName>
    <alternativeName>
        <fullName>Complex III subunit III</fullName>
    </alternativeName>
    <alternativeName>
        <fullName>Cytochrome b-c1 complex subunit 3</fullName>
    </alternativeName>
    <alternativeName>
        <fullName>Ubiquinol-cytochrome-c reductase complex cytochrome b subunit</fullName>
    </alternativeName>
</protein>
<sequence>MSGPLRKHHPLLKVVNHSVIDLPVPSNISVMWNFGSLLGLCLVSQILTGLFLAMHYTADVNLAFSSVAHICRDVNYGWLLRNLHANGASFMFICLYMHIGRGLYYGSYFYRETWNIGVMLLVLTMATAFLGYVLPWGQMSFWGATVITNLFSAIPYLGPDLVQWLWGGFSVDNATLTRFFAFHFFLPFMIAGLSVVHLLFLHQTGANNPTGLAGDVDKVPFHAYFSYKDVVGFVVLLAGLVFIALFSPNLLTDPENYIPANPLVTPVHIQPEWYFLFAYAILRSIPNKLGGVVALAMSIVVLFFMPFVHSSRQTSHNFRPLAQVLFWLMVVNVLLLTWLGGQPVEYPYIFLGQAASVIYFVNILLLIPIVGYVENKLLFS</sequence>
<gene>
    <name type="primary">MT-CYB</name>
    <name type="synonym">COB</name>
    <name type="synonym">CYTB</name>
    <name type="synonym">MTCYB</name>
</gene>
<reference key="1">
    <citation type="journal article" date="1999" name="Mol. Biol. Evol.">
        <title>Complete sequence, gene arrangement, and genetic code of mitochondrial DNA of the cephalochordate Branchiostoma floridae (Amphioxus).</title>
        <authorList>
            <person name="Boore J.L."/>
            <person name="Daehler L.L."/>
            <person name="Brown W.M."/>
        </authorList>
    </citation>
    <scope>NUCLEOTIDE SEQUENCE [LARGE SCALE GENOMIC DNA]</scope>
    <source>
        <strain evidence="5">S238N-H82</strain>
    </source>
</reference>
<accession>O47431</accession>
<name>CYB_BRAFL</name>
<organism>
    <name type="scientific">Branchiostoma floridae</name>
    <name type="common">Florida lancelet</name>
    <name type="synonym">Amphioxus</name>
    <dbReference type="NCBI Taxonomy" id="7739"/>
    <lineage>
        <taxon>Eukaryota</taxon>
        <taxon>Metazoa</taxon>
        <taxon>Chordata</taxon>
        <taxon>Cephalochordata</taxon>
        <taxon>Leptocardii</taxon>
        <taxon>Amphioxiformes</taxon>
        <taxon>Branchiostomatidae</taxon>
        <taxon>Branchiostoma</taxon>
    </lineage>
</organism>
<dbReference type="EMBL" id="AF098298">
    <property type="protein sequence ID" value="AAB88000.1"/>
    <property type="molecule type" value="Genomic_DNA"/>
</dbReference>
<dbReference type="RefSeq" id="NP_007767.1">
    <property type="nucleotide sequence ID" value="NC_000834.1"/>
</dbReference>
<dbReference type="SMR" id="O47431"/>
<dbReference type="FunCoup" id="O47431">
    <property type="interactions" value="10"/>
</dbReference>
<dbReference type="STRING" id="7739.O47431"/>
<dbReference type="GeneID" id="808736"/>
<dbReference type="KEGG" id="bfo:808736"/>
<dbReference type="CTD" id="4519"/>
<dbReference type="InParanoid" id="O47431"/>
<dbReference type="OMA" id="NISAWWN"/>
<dbReference type="OrthoDB" id="244at2759"/>
<dbReference type="Proteomes" id="UP000001554">
    <property type="component" value="Mitochondrion MT"/>
</dbReference>
<dbReference type="GO" id="GO:0016020">
    <property type="term" value="C:membrane"/>
    <property type="evidence" value="ECO:0000318"/>
    <property type="project" value="GO_Central"/>
</dbReference>
<dbReference type="GO" id="GO:0005743">
    <property type="term" value="C:mitochondrial inner membrane"/>
    <property type="evidence" value="ECO:0007669"/>
    <property type="project" value="UniProtKB-SubCell"/>
</dbReference>
<dbReference type="GO" id="GO:0045275">
    <property type="term" value="C:respiratory chain complex III"/>
    <property type="evidence" value="ECO:0000318"/>
    <property type="project" value="GO_Central"/>
</dbReference>
<dbReference type="GO" id="GO:0046872">
    <property type="term" value="F:metal ion binding"/>
    <property type="evidence" value="ECO:0007669"/>
    <property type="project" value="UniProtKB-KW"/>
</dbReference>
<dbReference type="GO" id="GO:0008121">
    <property type="term" value="F:ubiquinol-cytochrome-c reductase activity"/>
    <property type="evidence" value="ECO:0007669"/>
    <property type="project" value="InterPro"/>
</dbReference>
<dbReference type="GO" id="GO:0006122">
    <property type="term" value="P:mitochondrial electron transport, ubiquinol to cytochrome c"/>
    <property type="evidence" value="ECO:0000318"/>
    <property type="project" value="GO_Central"/>
</dbReference>
<dbReference type="CDD" id="cd00290">
    <property type="entry name" value="cytochrome_b_C"/>
    <property type="match status" value="1"/>
</dbReference>
<dbReference type="CDD" id="cd00284">
    <property type="entry name" value="Cytochrome_b_N"/>
    <property type="match status" value="1"/>
</dbReference>
<dbReference type="FunFam" id="1.20.810.10:FF:000002">
    <property type="entry name" value="Cytochrome b"/>
    <property type="match status" value="1"/>
</dbReference>
<dbReference type="Gene3D" id="1.20.810.10">
    <property type="entry name" value="Cytochrome Bc1 Complex, Chain C"/>
    <property type="match status" value="1"/>
</dbReference>
<dbReference type="InterPro" id="IPR005798">
    <property type="entry name" value="Cyt_b/b6_C"/>
</dbReference>
<dbReference type="InterPro" id="IPR036150">
    <property type="entry name" value="Cyt_b/b6_C_sf"/>
</dbReference>
<dbReference type="InterPro" id="IPR005797">
    <property type="entry name" value="Cyt_b/b6_N"/>
</dbReference>
<dbReference type="InterPro" id="IPR027387">
    <property type="entry name" value="Cytb/b6-like_sf"/>
</dbReference>
<dbReference type="InterPro" id="IPR030689">
    <property type="entry name" value="Cytochrome_b"/>
</dbReference>
<dbReference type="InterPro" id="IPR048260">
    <property type="entry name" value="Cytochrome_b_C_euk/bac"/>
</dbReference>
<dbReference type="InterPro" id="IPR048259">
    <property type="entry name" value="Cytochrome_b_N_euk/bac"/>
</dbReference>
<dbReference type="InterPro" id="IPR016174">
    <property type="entry name" value="Di-haem_cyt_TM"/>
</dbReference>
<dbReference type="PANTHER" id="PTHR19271">
    <property type="entry name" value="CYTOCHROME B"/>
    <property type="match status" value="1"/>
</dbReference>
<dbReference type="PANTHER" id="PTHR19271:SF16">
    <property type="entry name" value="CYTOCHROME B"/>
    <property type="match status" value="1"/>
</dbReference>
<dbReference type="Pfam" id="PF00032">
    <property type="entry name" value="Cytochrom_B_C"/>
    <property type="match status" value="1"/>
</dbReference>
<dbReference type="Pfam" id="PF00033">
    <property type="entry name" value="Cytochrome_B"/>
    <property type="match status" value="1"/>
</dbReference>
<dbReference type="PIRSF" id="PIRSF038885">
    <property type="entry name" value="COB"/>
    <property type="match status" value="1"/>
</dbReference>
<dbReference type="SUPFAM" id="SSF81648">
    <property type="entry name" value="a domain/subunit of cytochrome bc1 complex (Ubiquinol-cytochrome c reductase)"/>
    <property type="match status" value="1"/>
</dbReference>
<dbReference type="SUPFAM" id="SSF81342">
    <property type="entry name" value="Transmembrane di-heme cytochromes"/>
    <property type="match status" value="1"/>
</dbReference>
<dbReference type="PROSITE" id="PS51003">
    <property type="entry name" value="CYTB_CTER"/>
    <property type="match status" value="1"/>
</dbReference>
<dbReference type="PROSITE" id="PS51002">
    <property type="entry name" value="CYTB_NTER"/>
    <property type="match status" value="1"/>
</dbReference>
<geneLocation type="mitochondrion"/>
<comment type="function">
    <text evidence="2">Component of the ubiquinol-cytochrome c reductase complex (complex III or cytochrome b-c1 complex) that is part of the mitochondrial respiratory chain. The b-c1 complex mediates electron transfer from ubiquinol to cytochrome c. Contributes to the generation of a proton gradient across the mitochondrial membrane that is then used for ATP synthesis.</text>
</comment>
<comment type="cofactor">
    <cofactor evidence="2">
        <name>heme b</name>
        <dbReference type="ChEBI" id="CHEBI:60344"/>
    </cofactor>
    <text evidence="2">Binds 2 heme b groups non-covalently.</text>
</comment>
<comment type="subunit">
    <text evidence="2">The cytochrome bc1 complex contains 3 respiratory subunits (MT-CYB, CYC1 and UQCRFS1), 2 core proteins (UQCRC1 and UQCRC2) and probably 6 low-molecular weight proteins.</text>
</comment>
<comment type="subcellular location">
    <subcellularLocation>
        <location evidence="2">Mitochondrion inner membrane</location>
        <topology evidence="2">Multi-pass membrane protein</topology>
    </subcellularLocation>
</comment>
<comment type="miscellaneous">
    <text evidence="1">Heme 1 (or BL or b562) is low-potential and absorbs at about 562 nm, and heme 2 (or BH or b566) is high-potential and absorbs at about 566 nm.</text>
</comment>
<comment type="similarity">
    <text evidence="3 4">Belongs to the cytochrome b family.</text>
</comment>
<comment type="caution">
    <text evidence="2">The full-length protein contains only eight transmembrane helices, not nine as predicted by bioinformatics tools.</text>
</comment>